<evidence type="ECO:0000255" key="1">
    <source>
        <dbReference type="HAMAP-Rule" id="MF_00074"/>
    </source>
</evidence>
<keyword id="KW-0963">Cytoplasm</keyword>
<keyword id="KW-0489">Methyltransferase</keyword>
<keyword id="KW-0698">rRNA processing</keyword>
<keyword id="KW-0949">S-adenosyl-L-methionine</keyword>
<keyword id="KW-0808">Transferase</keyword>
<reference key="1">
    <citation type="submission" date="2006-09" db="EMBL/GenBank/DDBJ databases">
        <title>Complete sequence of Rhodopseudomonas palustris BisA53.</title>
        <authorList>
            <consortium name="US DOE Joint Genome Institute"/>
            <person name="Copeland A."/>
            <person name="Lucas S."/>
            <person name="Lapidus A."/>
            <person name="Barry K."/>
            <person name="Detter J.C."/>
            <person name="Glavina del Rio T."/>
            <person name="Hammon N."/>
            <person name="Israni S."/>
            <person name="Dalin E."/>
            <person name="Tice H."/>
            <person name="Pitluck S."/>
            <person name="Chain P."/>
            <person name="Malfatti S."/>
            <person name="Shin M."/>
            <person name="Vergez L."/>
            <person name="Schmutz J."/>
            <person name="Larimer F."/>
            <person name="Land M."/>
            <person name="Hauser L."/>
            <person name="Pelletier D.A."/>
            <person name="Kyrpides N."/>
            <person name="Kim E."/>
            <person name="Harwood C.S."/>
            <person name="Oda Y."/>
            <person name="Richardson P."/>
        </authorList>
    </citation>
    <scope>NUCLEOTIDE SEQUENCE [LARGE SCALE GENOMIC DNA]</scope>
    <source>
        <strain>BisA53</strain>
    </source>
</reference>
<name>RSMG_RHOP5</name>
<sequence>MAQRSQQASPPPNLAADKAAALRLTPVSRETESRLDAYVALLLQWQAKTNLISPATLPQLWTRHIADSLQLLTVAPDARTWLDFGSGGGFPGVVLACAMAELGGSVTLVERNAKKAAFLREALRVSGGVGQVILADIGDSVDRFPPHIDCITARAVAPLHQLIGFAEPLLHRGGKALFLKGQDVEAELTEAAKYWRLQPRLHASLTGGQGWIVELDRIERQSATTINGTRA</sequence>
<feature type="chain" id="PRO_1000010193" description="Ribosomal RNA small subunit methyltransferase G">
    <location>
        <begin position="1"/>
        <end position="231"/>
    </location>
</feature>
<feature type="binding site" evidence="1">
    <location>
        <position position="85"/>
    </location>
    <ligand>
        <name>S-adenosyl-L-methionine</name>
        <dbReference type="ChEBI" id="CHEBI:59789"/>
    </ligand>
</feature>
<feature type="binding site" evidence="1">
    <location>
        <position position="90"/>
    </location>
    <ligand>
        <name>S-adenosyl-L-methionine</name>
        <dbReference type="ChEBI" id="CHEBI:59789"/>
    </ligand>
</feature>
<feature type="binding site" evidence="1">
    <location>
        <position position="154"/>
    </location>
    <ligand>
        <name>S-adenosyl-L-methionine</name>
        <dbReference type="ChEBI" id="CHEBI:59789"/>
    </ligand>
</feature>
<gene>
    <name evidence="1" type="primary">rsmG</name>
    <name type="ordered locus">RPE_0385</name>
</gene>
<dbReference type="EC" id="2.1.1.170" evidence="1"/>
<dbReference type="EMBL" id="CP000463">
    <property type="protein sequence ID" value="ABJ04344.1"/>
    <property type="molecule type" value="Genomic_DNA"/>
</dbReference>
<dbReference type="SMR" id="Q07UP0"/>
<dbReference type="STRING" id="316055.RPE_0385"/>
<dbReference type="KEGG" id="rpe:RPE_0385"/>
<dbReference type="eggNOG" id="COG0357">
    <property type="taxonomic scope" value="Bacteria"/>
</dbReference>
<dbReference type="HOGENOM" id="CLU_065341_1_0_5"/>
<dbReference type="OrthoDB" id="9808773at2"/>
<dbReference type="GO" id="GO:0005829">
    <property type="term" value="C:cytosol"/>
    <property type="evidence" value="ECO:0007669"/>
    <property type="project" value="TreeGrafter"/>
</dbReference>
<dbReference type="GO" id="GO:0070043">
    <property type="term" value="F:rRNA (guanine-N7-)-methyltransferase activity"/>
    <property type="evidence" value="ECO:0007669"/>
    <property type="project" value="UniProtKB-UniRule"/>
</dbReference>
<dbReference type="CDD" id="cd02440">
    <property type="entry name" value="AdoMet_MTases"/>
    <property type="match status" value="1"/>
</dbReference>
<dbReference type="Gene3D" id="3.40.50.150">
    <property type="entry name" value="Vaccinia Virus protein VP39"/>
    <property type="match status" value="1"/>
</dbReference>
<dbReference type="HAMAP" id="MF_00074">
    <property type="entry name" value="16SrRNA_methyltr_G"/>
    <property type="match status" value="1"/>
</dbReference>
<dbReference type="InterPro" id="IPR003682">
    <property type="entry name" value="rRNA_ssu_MeTfrase_G"/>
</dbReference>
<dbReference type="InterPro" id="IPR029063">
    <property type="entry name" value="SAM-dependent_MTases_sf"/>
</dbReference>
<dbReference type="NCBIfam" id="TIGR00138">
    <property type="entry name" value="rsmG_gidB"/>
    <property type="match status" value="1"/>
</dbReference>
<dbReference type="PANTHER" id="PTHR31760">
    <property type="entry name" value="S-ADENOSYL-L-METHIONINE-DEPENDENT METHYLTRANSFERASES SUPERFAMILY PROTEIN"/>
    <property type="match status" value="1"/>
</dbReference>
<dbReference type="PANTHER" id="PTHR31760:SF0">
    <property type="entry name" value="S-ADENOSYL-L-METHIONINE-DEPENDENT METHYLTRANSFERASES SUPERFAMILY PROTEIN"/>
    <property type="match status" value="1"/>
</dbReference>
<dbReference type="Pfam" id="PF02527">
    <property type="entry name" value="GidB"/>
    <property type="match status" value="1"/>
</dbReference>
<dbReference type="PIRSF" id="PIRSF003078">
    <property type="entry name" value="GidB"/>
    <property type="match status" value="1"/>
</dbReference>
<dbReference type="SUPFAM" id="SSF53335">
    <property type="entry name" value="S-adenosyl-L-methionine-dependent methyltransferases"/>
    <property type="match status" value="1"/>
</dbReference>
<proteinExistence type="inferred from homology"/>
<organism>
    <name type="scientific">Rhodopseudomonas palustris (strain BisA53)</name>
    <dbReference type="NCBI Taxonomy" id="316055"/>
    <lineage>
        <taxon>Bacteria</taxon>
        <taxon>Pseudomonadati</taxon>
        <taxon>Pseudomonadota</taxon>
        <taxon>Alphaproteobacteria</taxon>
        <taxon>Hyphomicrobiales</taxon>
        <taxon>Nitrobacteraceae</taxon>
        <taxon>Rhodopseudomonas</taxon>
    </lineage>
</organism>
<accession>Q07UP0</accession>
<comment type="function">
    <text evidence="1">Specifically methylates the N7 position of guanine in position 527 of 16S rRNA.</text>
</comment>
<comment type="catalytic activity">
    <reaction evidence="1">
        <text>guanosine(527) in 16S rRNA + S-adenosyl-L-methionine = N(7)-methylguanosine(527) in 16S rRNA + S-adenosyl-L-homocysteine</text>
        <dbReference type="Rhea" id="RHEA:42732"/>
        <dbReference type="Rhea" id="RHEA-COMP:10209"/>
        <dbReference type="Rhea" id="RHEA-COMP:10210"/>
        <dbReference type="ChEBI" id="CHEBI:57856"/>
        <dbReference type="ChEBI" id="CHEBI:59789"/>
        <dbReference type="ChEBI" id="CHEBI:74269"/>
        <dbReference type="ChEBI" id="CHEBI:74480"/>
        <dbReference type="EC" id="2.1.1.170"/>
    </reaction>
</comment>
<comment type="subcellular location">
    <subcellularLocation>
        <location evidence="1">Cytoplasm</location>
    </subcellularLocation>
</comment>
<comment type="similarity">
    <text evidence="1">Belongs to the methyltransferase superfamily. RNA methyltransferase RsmG family.</text>
</comment>
<protein>
    <recommendedName>
        <fullName evidence="1">Ribosomal RNA small subunit methyltransferase G</fullName>
        <ecNumber evidence="1">2.1.1.170</ecNumber>
    </recommendedName>
    <alternativeName>
        <fullName evidence="1">16S rRNA 7-methylguanosine methyltransferase</fullName>
        <shortName evidence="1">16S rRNA m7G methyltransferase</shortName>
    </alternativeName>
</protein>